<dbReference type="EMBL" id="M22834">
    <property type="status" value="NOT_ANNOTATED_CDS"/>
    <property type="molecule type" value="mRNA"/>
</dbReference>
<dbReference type="EMBL" id="BC068618">
    <property type="protein sequence ID" value="AAH68618.1"/>
    <property type="molecule type" value="mRNA"/>
</dbReference>
<dbReference type="EMBL" id="Z71503">
    <property type="protein sequence ID" value="CAA96130.1"/>
    <property type="molecule type" value="Genomic_DNA"/>
</dbReference>
<dbReference type="PIR" id="JT0403">
    <property type="entry name" value="HSXL5A"/>
</dbReference>
<dbReference type="PDB" id="5NL0">
    <property type="method" value="X-ray"/>
    <property type="resolution" value="5.40 A"/>
    <property type="chains" value="Z=1-196"/>
</dbReference>
<dbReference type="PDB" id="8AAG">
    <property type="method" value="EM"/>
    <property type="resolution" value="10.00 A"/>
    <property type="chains" value="Z=1-196"/>
</dbReference>
<dbReference type="PDBsum" id="5NL0"/>
<dbReference type="PDBsum" id="8AAG"/>
<dbReference type="SMR" id="P22844"/>
<dbReference type="AGR" id="Xenbase:XB-GENE-6255778"/>
<dbReference type="Xenbase" id="XB-GENE-6255778">
    <property type="gene designation" value="h1-0.S"/>
</dbReference>
<dbReference type="Proteomes" id="UP000186698">
    <property type="component" value="Unplaced"/>
</dbReference>
<dbReference type="GO" id="GO:0000786">
    <property type="term" value="C:nucleosome"/>
    <property type="evidence" value="ECO:0007669"/>
    <property type="project" value="InterPro"/>
</dbReference>
<dbReference type="GO" id="GO:0005634">
    <property type="term" value="C:nucleus"/>
    <property type="evidence" value="ECO:0007669"/>
    <property type="project" value="UniProtKB-SubCell"/>
</dbReference>
<dbReference type="GO" id="GO:0003690">
    <property type="term" value="F:double-stranded DNA binding"/>
    <property type="evidence" value="ECO:0007669"/>
    <property type="project" value="TreeGrafter"/>
</dbReference>
<dbReference type="GO" id="GO:0031492">
    <property type="term" value="F:nucleosomal DNA binding"/>
    <property type="evidence" value="ECO:0007669"/>
    <property type="project" value="TreeGrafter"/>
</dbReference>
<dbReference type="GO" id="GO:0030527">
    <property type="term" value="F:structural constituent of chromatin"/>
    <property type="evidence" value="ECO:0007669"/>
    <property type="project" value="InterPro"/>
</dbReference>
<dbReference type="GO" id="GO:0030261">
    <property type="term" value="P:chromosome condensation"/>
    <property type="evidence" value="ECO:0007669"/>
    <property type="project" value="UniProtKB-KW"/>
</dbReference>
<dbReference type="GO" id="GO:0045910">
    <property type="term" value="P:negative regulation of DNA recombination"/>
    <property type="evidence" value="ECO:0007669"/>
    <property type="project" value="TreeGrafter"/>
</dbReference>
<dbReference type="GO" id="GO:0006334">
    <property type="term" value="P:nucleosome assembly"/>
    <property type="evidence" value="ECO:0007669"/>
    <property type="project" value="InterPro"/>
</dbReference>
<dbReference type="CDD" id="cd00073">
    <property type="entry name" value="H15"/>
    <property type="match status" value="1"/>
</dbReference>
<dbReference type="FunFam" id="1.10.10.10:FF:000140">
    <property type="entry name" value="Histone H1.0"/>
    <property type="match status" value="1"/>
</dbReference>
<dbReference type="Gene3D" id="1.10.10.10">
    <property type="entry name" value="Winged helix-like DNA-binding domain superfamily/Winged helix DNA-binding domain"/>
    <property type="match status" value="1"/>
</dbReference>
<dbReference type="InterPro" id="IPR005819">
    <property type="entry name" value="H1/H5"/>
</dbReference>
<dbReference type="InterPro" id="IPR005818">
    <property type="entry name" value="Histone_H1/H5_H15"/>
</dbReference>
<dbReference type="InterPro" id="IPR036388">
    <property type="entry name" value="WH-like_DNA-bd_sf"/>
</dbReference>
<dbReference type="InterPro" id="IPR036390">
    <property type="entry name" value="WH_DNA-bd_sf"/>
</dbReference>
<dbReference type="PANTHER" id="PTHR11467">
    <property type="entry name" value="HISTONE H1"/>
    <property type="match status" value="1"/>
</dbReference>
<dbReference type="PANTHER" id="PTHR11467:SF182">
    <property type="entry name" value="HISTONE H1.0"/>
    <property type="match status" value="1"/>
</dbReference>
<dbReference type="Pfam" id="PF00538">
    <property type="entry name" value="Linker_histone"/>
    <property type="match status" value="1"/>
</dbReference>
<dbReference type="PRINTS" id="PR00624">
    <property type="entry name" value="HISTONEH5"/>
</dbReference>
<dbReference type="SMART" id="SM00526">
    <property type="entry name" value="H15"/>
    <property type="match status" value="1"/>
</dbReference>
<dbReference type="SUPFAM" id="SSF46785">
    <property type="entry name" value="Winged helix' DNA-binding domain"/>
    <property type="match status" value="1"/>
</dbReference>
<dbReference type="PROSITE" id="PS51504">
    <property type="entry name" value="H15"/>
    <property type="match status" value="1"/>
</dbReference>
<name>H10B_XENLA</name>
<comment type="function">
    <text evidence="1">Histones H1 are necessary for the condensation of nucleosome chains into higher-order structures. The histones H1.0 are found in cells that are in terminal stages of differentiation or that have low rates of cell division (By similarity).</text>
</comment>
<comment type="subcellular location">
    <subcellularLocation>
        <location>Nucleus</location>
    </subcellularLocation>
    <subcellularLocation>
        <location>Chromosome</location>
    </subcellularLocation>
</comment>
<comment type="similarity">
    <text evidence="2">Belongs to the histone H1/H5 family.</text>
</comment>
<keyword id="KW-0002">3D-structure</keyword>
<keyword id="KW-0158">Chromosome</keyword>
<keyword id="KW-0903">Direct protein sequencing</keyword>
<keyword id="KW-0226">DNA condensation</keyword>
<keyword id="KW-0238">DNA-binding</keyword>
<keyword id="KW-0539">Nucleus</keyword>
<keyword id="KW-1185">Reference proteome</keyword>
<reference key="1">
    <citation type="journal article" date="1988" name="Gene">
        <title>Isolation and expression of cDNA clones coding for two sequence variants of Xenopus laevis histone H5.</title>
        <authorList>
            <person name="Rutledge R.G."/>
            <person name="Neelin J.M."/>
            <person name="Seligy V.L."/>
        </authorList>
    </citation>
    <scope>NUCLEOTIDE SEQUENCE [MRNA]</scope>
    <source>
        <tissue>Erythroid cell</tissue>
    </source>
</reference>
<reference key="2">
    <citation type="journal article" date="1997" name="Gene">
        <title>Characterization of the two H1(0)-encoding genes from Xenopus laevis.</title>
        <authorList>
            <person name="Brocard M."/>
            <person name="Triebe S."/>
            <person name="Peretti M."/>
            <person name="Doenecke D."/>
            <person name="Khochbin S."/>
        </authorList>
    </citation>
    <scope>NUCLEOTIDE SEQUENCE [GENOMIC DNA]</scope>
</reference>
<reference key="3">
    <citation type="submission" date="2004-04" db="EMBL/GenBank/DDBJ databases">
        <authorList>
            <consortium name="NIH - Xenopus Gene Collection (XGC) project"/>
        </authorList>
    </citation>
    <scope>NUCLEOTIDE SEQUENCE [LARGE SCALE MRNA]</scope>
    <source>
        <tissue>Kidney</tissue>
    </source>
</reference>
<reference key="4">
    <citation type="thesis" date="1982" institute="Carleton University / Ottawa" country="Canada">
        <authorList>
            <person name="Brown G.L."/>
        </authorList>
    </citation>
    <scope>PROTEIN SEQUENCE OF 31-38</scope>
</reference>
<organism>
    <name type="scientific">Xenopus laevis</name>
    <name type="common">African clawed frog</name>
    <dbReference type="NCBI Taxonomy" id="8355"/>
    <lineage>
        <taxon>Eukaryota</taxon>
        <taxon>Metazoa</taxon>
        <taxon>Chordata</taxon>
        <taxon>Craniata</taxon>
        <taxon>Vertebrata</taxon>
        <taxon>Euteleostomi</taxon>
        <taxon>Amphibia</taxon>
        <taxon>Batrachia</taxon>
        <taxon>Anura</taxon>
        <taxon>Pipoidea</taxon>
        <taxon>Pipidae</taxon>
        <taxon>Xenopodinae</taxon>
        <taxon>Xenopus</taxon>
        <taxon>Xenopus</taxon>
    </lineage>
</organism>
<feature type="chain" id="PRO_0000196008" description="Histone H1.0-B">
    <location>
        <begin position="1"/>
        <end position="196"/>
    </location>
</feature>
<feature type="domain" description="H15" evidence="2">
    <location>
        <begin position="24"/>
        <end position="97"/>
    </location>
</feature>
<feature type="region of interest" description="Disordered" evidence="3">
    <location>
        <begin position="1"/>
        <end position="29"/>
    </location>
</feature>
<feature type="region of interest" description="Disordered" evidence="3">
    <location>
        <begin position="86"/>
        <end position="196"/>
    </location>
</feature>
<feature type="compositionally biased region" description="Basic residues" evidence="3">
    <location>
        <begin position="104"/>
        <end position="196"/>
    </location>
</feature>
<protein>
    <recommendedName>
        <fullName>Histone H1.0-B</fullName>
    </recommendedName>
    <alternativeName>
        <fullName>H1-SA</fullName>
    </alternativeName>
    <alternativeName>
        <fullName>H1D</fullName>
    </alternativeName>
    <alternativeName>
        <fullName>Histone H1(0)-2</fullName>
    </alternativeName>
    <alternativeName>
        <fullName>Histone H5A</fullName>
    </alternativeName>
    <alternativeName>
        <fullName>XlH5A</fullName>
    </alternativeName>
</protein>
<evidence type="ECO:0000250" key="1"/>
<evidence type="ECO:0000255" key="2">
    <source>
        <dbReference type="PROSITE-ProRule" id="PRU00837"/>
    </source>
</evidence>
<evidence type="ECO:0000256" key="3">
    <source>
        <dbReference type="SAM" id="MobiDB-lite"/>
    </source>
</evidence>
<accession>P22844</accession>
<accession>Q5D034</accession>
<gene>
    <name type="primary">h1-0-b</name>
</gene>
<sequence length="196" mass="21062">MAENSAATPAAKPKRSKALKKSTDHPKYSDMILAAVQAEKSRSGSSRQSIQKYIKNHYKVGENADSQIKLSIKRLVTSGALKQTKGVGASGSFRLAKADEGKKPAKKPKKEIKKAVSPKKVAKPKKAAKSPAKAKKPKVAEKKVKKVAKKKPAPSPKKAKKTKTVKAKPVRASKVKKAKPSKPKAKASPKKSGRKK</sequence>
<proteinExistence type="evidence at protein level"/>